<evidence type="ECO:0000250" key="1"/>
<evidence type="ECO:0000305" key="2"/>
<dbReference type="EMBL" id="BC041526">
    <property type="protein sequence ID" value="AAH41526.1"/>
    <property type="molecule type" value="mRNA"/>
</dbReference>
<dbReference type="RefSeq" id="NP_001080764.1">
    <property type="nucleotide sequence ID" value="NM_001087295.1"/>
</dbReference>
<dbReference type="SMR" id="Q8AVQ3"/>
<dbReference type="DNASU" id="380457"/>
<dbReference type="GeneID" id="380457"/>
<dbReference type="KEGG" id="xla:380457"/>
<dbReference type="AGR" id="Xenbase:XB-GENE-1006032"/>
<dbReference type="CTD" id="380457"/>
<dbReference type="Xenbase" id="XB-GENE-1006032">
    <property type="gene designation" value="ywhab.S"/>
</dbReference>
<dbReference type="OMA" id="GDMQPTH"/>
<dbReference type="OrthoDB" id="10260625at2759"/>
<dbReference type="Proteomes" id="UP000186698">
    <property type="component" value="Chromosome 9_10S"/>
</dbReference>
<dbReference type="Bgee" id="380457">
    <property type="expression patterns" value="Expressed in brain and 19 other cell types or tissues"/>
</dbReference>
<dbReference type="GO" id="GO:0005737">
    <property type="term" value="C:cytoplasm"/>
    <property type="evidence" value="ECO:0000318"/>
    <property type="project" value="GO_Central"/>
</dbReference>
<dbReference type="GO" id="GO:0008104">
    <property type="term" value="P:protein localization"/>
    <property type="evidence" value="ECO:0000318"/>
    <property type="project" value="GO_Central"/>
</dbReference>
<dbReference type="GO" id="GO:0007165">
    <property type="term" value="P:signal transduction"/>
    <property type="evidence" value="ECO:0000318"/>
    <property type="project" value="GO_Central"/>
</dbReference>
<dbReference type="CDD" id="cd10022">
    <property type="entry name" value="14-3-3_beta_zeta"/>
    <property type="match status" value="1"/>
</dbReference>
<dbReference type="FunFam" id="1.20.190.20:FF:000001">
    <property type="entry name" value="14-3-3 gamma 1"/>
    <property type="match status" value="1"/>
</dbReference>
<dbReference type="Gene3D" id="1.20.190.20">
    <property type="entry name" value="14-3-3 domain"/>
    <property type="match status" value="1"/>
</dbReference>
<dbReference type="InterPro" id="IPR000308">
    <property type="entry name" value="14-3-3"/>
</dbReference>
<dbReference type="InterPro" id="IPR023409">
    <property type="entry name" value="14-3-3_CS"/>
</dbReference>
<dbReference type="InterPro" id="IPR036815">
    <property type="entry name" value="14-3-3_dom_sf"/>
</dbReference>
<dbReference type="InterPro" id="IPR023410">
    <property type="entry name" value="14-3-3_domain"/>
</dbReference>
<dbReference type="PANTHER" id="PTHR18860">
    <property type="entry name" value="14-3-3 PROTEIN"/>
    <property type="match status" value="1"/>
</dbReference>
<dbReference type="Pfam" id="PF00244">
    <property type="entry name" value="14-3-3"/>
    <property type="match status" value="1"/>
</dbReference>
<dbReference type="PIRSF" id="PIRSF000868">
    <property type="entry name" value="14-3-3"/>
    <property type="match status" value="1"/>
</dbReference>
<dbReference type="PRINTS" id="PR00305">
    <property type="entry name" value="1433ZETA"/>
</dbReference>
<dbReference type="SMART" id="SM00101">
    <property type="entry name" value="14_3_3"/>
    <property type="match status" value="1"/>
</dbReference>
<dbReference type="SUPFAM" id="SSF48445">
    <property type="entry name" value="14-3-3 protein"/>
    <property type="match status" value="1"/>
</dbReference>
<dbReference type="PROSITE" id="PS00796">
    <property type="entry name" value="1433_1"/>
    <property type="match status" value="1"/>
</dbReference>
<dbReference type="PROSITE" id="PS00797">
    <property type="entry name" value="1433_2"/>
    <property type="match status" value="1"/>
</dbReference>
<accession>Q8AVQ3</accession>
<gene>
    <name type="primary">ywhab-b</name>
</gene>
<sequence length="244" mass="27759">MDKSELVQKAKLSEQAERYDDMAASMKAVTELGAELSNEERNLLSVAYKNVVGARRSSWRVISSIEQKTEGNDKRQQMAREYREKVETELQDICKDVLDLLDRFLVPNATPPESKVFYLKMKGDYYRYLSEVASGDSKQETVANSQQAYQEAFEISKSEMQPTHPIRLGLALNFSVFYYEILNSPDKACSLAKSAFDEAIAELDTLNEESYKDSTLIMQLLRDNLTLWTSETQGEEADNVEGDN</sequence>
<proteinExistence type="evidence at transcript level"/>
<name>143BB_XENLA</name>
<comment type="function">
    <text evidence="1">Adapter protein implicated in the regulation of a large spectrum of both general and specialized signaling pathways. Binds to a large number of partners, usually by recognition of a phosphoserine or phosphothreonine motif. Binding generally results in the modulation of the activity of the binding partner (By similarity).</text>
</comment>
<comment type="subunit">
    <text evidence="1">Homodimer, and heterodimer with other family members.</text>
</comment>
<comment type="subcellular location">
    <subcellularLocation>
        <location evidence="1">Cytoplasm</location>
    </subcellularLocation>
</comment>
<comment type="similarity">
    <text evidence="2">Belongs to the 14-3-3 family.</text>
</comment>
<organism>
    <name type="scientific">Xenopus laevis</name>
    <name type="common">African clawed frog</name>
    <dbReference type="NCBI Taxonomy" id="8355"/>
    <lineage>
        <taxon>Eukaryota</taxon>
        <taxon>Metazoa</taxon>
        <taxon>Chordata</taxon>
        <taxon>Craniata</taxon>
        <taxon>Vertebrata</taxon>
        <taxon>Euteleostomi</taxon>
        <taxon>Amphibia</taxon>
        <taxon>Batrachia</taxon>
        <taxon>Anura</taxon>
        <taxon>Pipoidea</taxon>
        <taxon>Pipidae</taxon>
        <taxon>Xenopodinae</taxon>
        <taxon>Xenopus</taxon>
        <taxon>Xenopus</taxon>
    </lineage>
</organism>
<keyword id="KW-0007">Acetylation</keyword>
<keyword id="KW-0963">Cytoplasm</keyword>
<keyword id="KW-1185">Reference proteome</keyword>
<reference key="1">
    <citation type="submission" date="2002-12" db="EMBL/GenBank/DDBJ databases">
        <authorList>
            <consortium name="NIH - Xenopus Gene Collection (XGC) project"/>
        </authorList>
    </citation>
    <scope>NUCLEOTIDE SEQUENCE [LARGE SCALE MRNA]</scope>
    <source>
        <tissue>Embryo</tissue>
    </source>
</reference>
<feature type="chain" id="PRO_0000058599" description="14-3-3 protein beta/alpha-B">
    <location>
        <begin position="1"/>
        <end position="244"/>
    </location>
</feature>
<feature type="site" description="Interaction with phosphoserine on interacting protein" evidence="1">
    <location>
        <position position="56"/>
    </location>
</feature>
<feature type="site" description="Interaction with phosphoserine on interacting protein" evidence="1">
    <location>
        <position position="127"/>
    </location>
</feature>
<feature type="modified residue" description="N-acetylmethionine" evidence="1">
    <location>
        <position position="1"/>
    </location>
</feature>
<protein>
    <recommendedName>
        <fullName>14-3-3 protein beta/alpha-B</fullName>
    </recommendedName>
</protein>